<comment type="function">
    <text>Vasotocin is an antidiuretic hormone.</text>
</comment>
<comment type="subcellular location">
    <subcellularLocation>
        <location>Secreted</location>
    </subcellularLocation>
</comment>
<comment type="similarity">
    <text evidence="3">Belongs to the vasopressin/oxytocin family.</text>
</comment>
<dbReference type="EMBL" id="M25144">
    <property type="protein sequence ID" value="AAA49198.1"/>
    <property type="molecule type" value="mRNA"/>
</dbReference>
<dbReference type="PIR" id="A32669">
    <property type="entry name" value="A32669"/>
</dbReference>
<dbReference type="SMR" id="P17668"/>
<dbReference type="GO" id="GO:0005615">
    <property type="term" value="C:extracellular space"/>
    <property type="evidence" value="ECO:0007669"/>
    <property type="project" value="TreeGrafter"/>
</dbReference>
<dbReference type="GO" id="GO:0030141">
    <property type="term" value="C:secretory granule"/>
    <property type="evidence" value="ECO:0007669"/>
    <property type="project" value="TreeGrafter"/>
</dbReference>
<dbReference type="GO" id="GO:0005185">
    <property type="term" value="F:neurohypophyseal hormone activity"/>
    <property type="evidence" value="ECO:0007669"/>
    <property type="project" value="InterPro"/>
</dbReference>
<dbReference type="FunFam" id="2.60.9.10:FF:000001">
    <property type="entry name" value="oxytocin-neurophysin 1"/>
    <property type="match status" value="1"/>
</dbReference>
<dbReference type="Gene3D" id="2.60.9.10">
    <property type="entry name" value="Neurohypophysial hormone domain"/>
    <property type="match status" value="1"/>
</dbReference>
<dbReference type="InterPro" id="IPR000981">
    <property type="entry name" value="Neurhyp_horm"/>
</dbReference>
<dbReference type="InterPro" id="IPR036387">
    <property type="entry name" value="Neurhyp_horm_dom_sf"/>
</dbReference>
<dbReference type="InterPro" id="IPR022423">
    <property type="entry name" value="Neurohypophysial_hormone_CS"/>
</dbReference>
<dbReference type="PANTHER" id="PTHR11681">
    <property type="entry name" value="NEUROPHYSIN"/>
    <property type="match status" value="1"/>
</dbReference>
<dbReference type="PANTHER" id="PTHR11681:SF13">
    <property type="entry name" value="VASOPRESSIN-NEUROPHYSIN 2-COPEPTIN PRECURSOR"/>
    <property type="match status" value="1"/>
</dbReference>
<dbReference type="Pfam" id="PF00220">
    <property type="entry name" value="Hormone_4"/>
    <property type="match status" value="1"/>
</dbReference>
<dbReference type="Pfam" id="PF00184">
    <property type="entry name" value="Hormone_5"/>
    <property type="match status" value="1"/>
</dbReference>
<dbReference type="PIRSF" id="PIRSF001815">
    <property type="entry name" value="Nonapeptide_hormone_precursor"/>
    <property type="match status" value="1"/>
</dbReference>
<dbReference type="PRINTS" id="PR00831">
    <property type="entry name" value="NEUROPHYSIN"/>
</dbReference>
<dbReference type="SMART" id="SM00003">
    <property type="entry name" value="NH"/>
    <property type="match status" value="1"/>
</dbReference>
<dbReference type="SUPFAM" id="SSF49606">
    <property type="entry name" value="Neurophysin II"/>
    <property type="match status" value="1"/>
</dbReference>
<dbReference type="PROSITE" id="PS00264">
    <property type="entry name" value="NEUROHYPOPHYS_HORM"/>
    <property type="match status" value="1"/>
</dbReference>
<accession>P17668</accession>
<organism>
    <name type="scientific">Catostomus commersonii</name>
    <name type="common">White sucker</name>
    <name type="synonym">Cyprinus commersonnii</name>
    <dbReference type="NCBI Taxonomy" id="7971"/>
    <lineage>
        <taxon>Eukaryota</taxon>
        <taxon>Metazoa</taxon>
        <taxon>Chordata</taxon>
        <taxon>Craniata</taxon>
        <taxon>Vertebrata</taxon>
        <taxon>Euteleostomi</taxon>
        <taxon>Actinopterygii</taxon>
        <taxon>Neopterygii</taxon>
        <taxon>Teleostei</taxon>
        <taxon>Ostariophysi</taxon>
        <taxon>Cypriniformes</taxon>
        <taxon>Catostomoidei</taxon>
        <taxon>Catostomidae</taxon>
        <taxon>Catostomus</taxon>
    </lineage>
</organism>
<evidence type="ECO:0000250" key="1"/>
<evidence type="ECO:0000250" key="2">
    <source>
        <dbReference type="UniProtKB" id="P01175"/>
    </source>
</evidence>
<evidence type="ECO:0000305" key="3"/>
<name>NEU3_CATCO</name>
<sequence>MSDSFLPTCILCLLALSSACYIQNCPRGGKRSQPDTSRECVSCGPGNAGRCYGPSICCGAALGCLVGSPETMSCMEENHLPSPCETGGRPCGDEGRCAAPGVCCDSVSCVMDSECLEDVRSDQSEDPSRLKTVSGEILLRLLNLASRGRRDF</sequence>
<proteinExistence type="evidence at transcript level"/>
<keyword id="KW-0027">Amidation</keyword>
<keyword id="KW-0165">Cleavage on pair of basic residues</keyword>
<keyword id="KW-1015">Disulfide bond</keyword>
<keyword id="KW-0372">Hormone</keyword>
<keyword id="KW-0964">Secreted</keyword>
<keyword id="KW-0732">Signal</keyword>
<feature type="signal peptide">
    <location>
        <begin position="1"/>
        <end position="19"/>
    </location>
</feature>
<feature type="peptide" id="PRO_0000020548" description="Vasotocin">
    <location>
        <begin position="20"/>
        <end position="28"/>
    </location>
</feature>
<feature type="chain" id="PRO_0000020549" description="Neurophysin VT 1">
    <location>
        <begin position="32"/>
        <end position="152"/>
    </location>
</feature>
<feature type="modified residue" description="Glycine amide" evidence="1">
    <location>
        <position position="28"/>
    </location>
</feature>
<feature type="disulfide bond" evidence="2">
    <location>
        <begin position="20"/>
        <end position="25"/>
    </location>
</feature>
<feature type="disulfide bond" evidence="2">
    <location>
        <begin position="40"/>
        <end position="84"/>
    </location>
</feature>
<feature type="disulfide bond" evidence="2">
    <location>
        <begin position="43"/>
        <end position="57"/>
    </location>
</feature>
<feature type="disulfide bond" evidence="2">
    <location>
        <begin position="51"/>
        <end position="74"/>
    </location>
</feature>
<feature type="disulfide bond" evidence="2">
    <location>
        <begin position="58"/>
        <end position="64"/>
    </location>
</feature>
<feature type="disulfide bond" evidence="2">
    <location>
        <begin position="91"/>
        <end position="103"/>
    </location>
</feature>
<feature type="disulfide bond" evidence="2">
    <location>
        <begin position="97"/>
        <end position="115"/>
    </location>
</feature>
<feature type="disulfide bond" evidence="2">
    <location>
        <begin position="104"/>
        <end position="109"/>
    </location>
</feature>
<reference key="1">
    <citation type="journal article" date="1989" name="Proc. Natl. Acad. Sci. U.S.A.">
        <title>Vasotocin and isotocin precursors from the white sucker, Catostomus commersoni: cloning and sequence analysis of the cDNAs.</title>
        <authorList>
            <person name="Heierhorst J."/>
            <person name="Morley S.D."/>
            <person name="Figueroa J."/>
            <person name="Krentler C."/>
            <person name="Lederis K."/>
            <person name="Richter D."/>
        </authorList>
    </citation>
    <scope>NUCLEOTIDE SEQUENCE [MRNA]</scope>
</reference>
<reference key="2">
    <citation type="journal article" date="1990" name="Biochemistry">
        <title>Vasotocin genes of the teleost fish Catostomus commersoni: gene structure, exon-intron boundary, and hormone precursor organization.</title>
        <authorList>
            <person name="Morley S.D."/>
            <person name="Schoenrock C."/>
            <person name="Heierhorst J."/>
            <person name="Figueroa J."/>
            <person name="Lederis K."/>
            <person name="Richter D."/>
        </authorList>
    </citation>
    <scope>NUCLEOTIDE SEQUENCE [MRNA]</scope>
</reference>
<protein>
    <recommendedName>
        <fullName>Vasotocin-neurophysin VT 1</fullName>
    </recommendedName>
    <component>
        <recommendedName>
            <fullName>Vasotocin</fullName>
            <shortName>VT</shortName>
        </recommendedName>
    </component>
    <component>
        <recommendedName>
            <fullName>Neurophysin VT 1</fullName>
        </recommendedName>
    </component>
</protein>